<gene>
    <name type="ordered locus">At4g32950</name>
    <name type="ORF">F26P21.70</name>
</gene>
<accession>O82637</accession>
<protein>
    <recommendedName>
        <fullName>Probable protein phosphatase 2C 61</fullName>
        <shortName>AtPP2C61</shortName>
        <ecNumber>3.1.3.16</ecNumber>
    </recommendedName>
</protein>
<keyword id="KW-0378">Hydrolase</keyword>
<keyword id="KW-0460">Magnesium</keyword>
<keyword id="KW-0464">Manganese</keyword>
<keyword id="KW-0479">Metal-binding</keyword>
<keyword id="KW-0904">Protein phosphatase</keyword>
<keyword id="KW-1185">Reference proteome</keyword>
<feature type="chain" id="PRO_0000367983" description="Probable protein phosphatase 2C 61">
    <location>
        <begin position="1"/>
        <end position="326"/>
    </location>
</feature>
<feature type="domain" description="PPM-type phosphatase" evidence="2">
    <location>
        <begin position="42"/>
        <end position="316"/>
    </location>
</feature>
<feature type="binding site" evidence="1">
    <location>
        <position position="77"/>
    </location>
    <ligand>
        <name>Mn(2+)</name>
        <dbReference type="ChEBI" id="CHEBI:29035"/>
        <label>1</label>
    </ligand>
</feature>
<feature type="binding site" evidence="1">
    <location>
        <position position="77"/>
    </location>
    <ligand>
        <name>Mn(2+)</name>
        <dbReference type="ChEBI" id="CHEBI:29035"/>
        <label>2</label>
    </ligand>
</feature>
<feature type="binding site" evidence="1">
    <location>
        <position position="78"/>
    </location>
    <ligand>
        <name>Mn(2+)</name>
        <dbReference type="ChEBI" id="CHEBI:29035"/>
        <label>1</label>
    </ligand>
</feature>
<feature type="binding site" evidence="1">
    <location>
        <position position="261"/>
    </location>
    <ligand>
        <name>Mn(2+)</name>
        <dbReference type="ChEBI" id="CHEBI:29035"/>
        <label>2</label>
    </ligand>
</feature>
<feature type="binding site" evidence="1">
    <location>
        <position position="307"/>
    </location>
    <ligand>
        <name>Mn(2+)</name>
        <dbReference type="ChEBI" id="CHEBI:29035"/>
        <label>2</label>
    </ligand>
</feature>
<organism>
    <name type="scientific">Arabidopsis thaliana</name>
    <name type="common">Mouse-ear cress</name>
    <dbReference type="NCBI Taxonomy" id="3702"/>
    <lineage>
        <taxon>Eukaryota</taxon>
        <taxon>Viridiplantae</taxon>
        <taxon>Streptophyta</taxon>
        <taxon>Embryophyta</taxon>
        <taxon>Tracheophyta</taxon>
        <taxon>Spermatophyta</taxon>
        <taxon>Magnoliopsida</taxon>
        <taxon>eudicotyledons</taxon>
        <taxon>Gunneridae</taxon>
        <taxon>Pentapetalae</taxon>
        <taxon>rosids</taxon>
        <taxon>malvids</taxon>
        <taxon>Brassicales</taxon>
        <taxon>Brassicaceae</taxon>
        <taxon>Camelineae</taxon>
        <taxon>Arabidopsis</taxon>
    </lineage>
</organism>
<name>P2C61_ARATH</name>
<proteinExistence type="inferred from homology"/>
<reference key="1">
    <citation type="journal article" date="1999" name="Nature">
        <title>Sequence and analysis of chromosome 4 of the plant Arabidopsis thaliana.</title>
        <authorList>
            <person name="Mayer K.F.X."/>
            <person name="Schueller C."/>
            <person name="Wambutt R."/>
            <person name="Murphy G."/>
            <person name="Volckaert G."/>
            <person name="Pohl T."/>
            <person name="Duesterhoeft A."/>
            <person name="Stiekema W."/>
            <person name="Entian K.-D."/>
            <person name="Terryn N."/>
            <person name="Harris B."/>
            <person name="Ansorge W."/>
            <person name="Brandt P."/>
            <person name="Grivell L.A."/>
            <person name="Rieger M."/>
            <person name="Weichselgartner M."/>
            <person name="de Simone V."/>
            <person name="Obermaier B."/>
            <person name="Mache R."/>
            <person name="Mueller M."/>
            <person name="Kreis M."/>
            <person name="Delseny M."/>
            <person name="Puigdomenech P."/>
            <person name="Watson M."/>
            <person name="Schmidtheini T."/>
            <person name="Reichert B."/>
            <person name="Portetelle D."/>
            <person name="Perez-Alonso M."/>
            <person name="Boutry M."/>
            <person name="Bancroft I."/>
            <person name="Vos P."/>
            <person name="Hoheisel J."/>
            <person name="Zimmermann W."/>
            <person name="Wedler H."/>
            <person name="Ridley P."/>
            <person name="Langham S.-A."/>
            <person name="McCullagh B."/>
            <person name="Bilham L."/>
            <person name="Robben J."/>
            <person name="van der Schueren J."/>
            <person name="Grymonprez B."/>
            <person name="Chuang Y.-J."/>
            <person name="Vandenbussche F."/>
            <person name="Braeken M."/>
            <person name="Weltjens I."/>
            <person name="Voet M."/>
            <person name="Bastiaens I."/>
            <person name="Aert R."/>
            <person name="Defoor E."/>
            <person name="Weitzenegger T."/>
            <person name="Bothe G."/>
            <person name="Ramsperger U."/>
            <person name="Hilbert H."/>
            <person name="Braun M."/>
            <person name="Holzer E."/>
            <person name="Brandt A."/>
            <person name="Peters S."/>
            <person name="van Staveren M."/>
            <person name="Dirkse W."/>
            <person name="Mooijman P."/>
            <person name="Klein Lankhorst R."/>
            <person name="Rose M."/>
            <person name="Hauf J."/>
            <person name="Koetter P."/>
            <person name="Berneiser S."/>
            <person name="Hempel S."/>
            <person name="Feldpausch M."/>
            <person name="Lamberth S."/>
            <person name="Van den Daele H."/>
            <person name="De Keyser A."/>
            <person name="Buysshaert C."/>
            <person name="Gielen J."/>
            <person name="Villarroel R."/>
            <person name="De Clercq R."/>
            <person name="van Montagu M."/>
            <person name="Rogers J."/>
            <person name="Cronin A."/>
            <person name="Quail M.A."/>
            <person name="Bray-Allen S."/>
            <person name="Clark L."/>
            <person name="Doggett J."/>
            <person name="Hall S."/>
            <person name="Kay M."/>
            <person name="Lennard N."/>
            <person name="McLay K."/>
            <person name="Mayes R."/>
            <person name="Pettett A."/>
            <person name="Rajandream M.A."/>
            <person name="Lyne M."/>
            <person name="Benes V."/>
            <person name="Rechmann S."/>
            <person name="Borkova D."/>
            <person name="Bloecker H."/>
            <person name="Scharfe M."/>
            <person name="Grimm M."/>
            <person name="Loehnert T.-H."/>
            <person name="Dose S."/>
            <person name="de Haan M."/>
            <person name="Maarse A.C."/>
            <person name="Schaefer M."/>
            <person name="Mueller-Auer S."/>
            <person name="Gabel C."/>
            <person name="Fuchs M."/>
            <person name="Fartmann B."/>
            <person name="Granderath K."/>
            <person name="Dauner D."/>
            <person name="Herzl A."/>
            <person name="Neumann S."/>
            <person name="Argiriou A."/>
            <person name="Vitale D."/>
            <person name="Liguori R."/>
            <person name="Piravandi E."/>
            <person name="Massenet O."/>
            <person name="Quigley F."/>
            <person name="Clabauld G."/>
            <person name="Muendlein A."/>
            <person name="Felber R."/>
            <person name="Schnabl S."/>
            <person name="Hiller R."/>
            <person name="Schmidt W."/>
            <person name="Lecharny A."/>
            <person name="Aubourg S."/>
            <person name="Chefdor F."/>
            <person name="Cooke R."/>
            <person name="Berger C."/>
            <person name="Monfort A."/>
            <person name="Casacuberta E."/>
            <person name="Gibbons T."/>
            <person name="Weber N."/>
            <person name="Vandenbol M."/>
            <person name="Bargues M."/>
            <person name="Terol J."/>
            <person name="Torres A."/>
            <person name="Perez-Perez A."/>
            <person name="Purnelle B."/>
            <person name="Bent E."/>
            <person name="Johnson S."/>
            <person name="Tacon D."/>
            <person name="Jesse T."/>
            <person name="Heijnen L."/>
            <person name="Schwarz S."/>
            <person name="Scholler P."/>
            <person name="Heber S."/>
            <person name="Francs P."/>
            <person name="Bielke C."/>
            <person name="Frishman D."/>
            <person name="Haase D."/>
            <person name="Lemcke K."/>
            <person name="Mewes H.-W."/>
            <person name="Stocker S."/>
            <person name="Zaccaria P."/>
            <person name="Bevan M."/>
            <person name="Wilson R.K."/>
            <person name="de la Bastide M."/>
            <person name="Habermann K."/>
            <person name="Parnell L."/>
            <person name="Dedhia N."/>
            <person name="Gnoj L."/>
            <person name="Schutz K."/>
            <person name="Huang E."/>
            <person name="Spiegel L."/>
            <person name="Sekhon M."/>
            <person name="Murray J."/>
            <person name="Sheet P."/>
            <person name="Cordes M."/>
            <person name="Abu-Threideh J."/>
            <person name="Stoneking T."/>
            <person name="Kalicki J."/>
            <person name="Graves T."/>
            <person name="Harmon G."/>
            <person name="Edwards J."/>
            <person name="Latreille P."/>
            <person name="Courtney L."/>
            <person name="Cloud J."/>
            <person name="Abbott A."/>
            <person name="Scott K."/>
            <person name="Johnson D."/>
            <person name="Minx P."/>
            <person name="Bentley D."/>
            <person name="Fulton B."/>
            <person name="Miller N."/>
            <person name="Greco T."/>
            <person name="Kemp K."/>
            <person name="Kramer J."/>
            <person name="Fulton L."/>
            <person name="Mardis E."/>
            <person name="Dante M."/>
            <person name="Pepin K."/>
            <person name="Hillier L.W."/>
            <person name="Nelson J."/>
            <person name="Spieth J."/>
            <person name="Ryan E."/>
            <person name="Andrews S."/>
            <person name="Geisel C."/>
            <person name="Layman D."/>
            <person name="Du H."/>
            <person name="Ali J."/>
            <person name="Berghoff A."/>
            <person name="Jones K."/>
            <person name="Drone K."/>
            <person name="Cotton M."/>
            <person name="Joshu C."/>
            <person name="Antonoiu B."/>
            <person name="Zidanic M."/>
            <person name="Strong C."/>
            <person name="Sun H."/>
            <person name="Lamar B."/>
            <person name="Yordan C."/>
            <person name="Ma P."/>
            <person name="Zhong J."/>
            <person name="Preston R."/>
            <person name="Vil D."/>
            <person name="Shekher M."/>
            <person name="Matero A."/>
            <person name="Shah R."/>
            <person name="Swaby I.K."/>
            <person name="O'Shaughnessy A."/>
            <person name="Rodriguez M."/>
            <person name="Hoffman J."/>
            <person name="Till S."/>
            <person name="Granat S."/>
            <person name="Shohdy N."/>
            <person name="Hasegawa A."/>
            <person name="Hameed A."/>
            <person name="Lodhi M."/>
            <person name="Johnson A."/>
            <person name="Chen E."/>
            <person name="Marra M.A."/>
            <person name="Martienssen R."/>
            <person name="McCombie W.R."/>
        </authorList>
    </citation>
    <scope>NUCLEOTIDE SEQUENCE [LARGE SCALE GENOMIC DNA]</scope>
    <source>
        <strain>cv. Columbia</strain>
    </source>
</reference>
<reference key="2">
    <citation type="journal article" date="2017" name="Plant J.">
        <title>Araport11: a complete reannotation of the Arabidopsis thaliana reference genome.</title>
        <authorList>
            <person name="Cheng C.Y."/>
            <person name="Krishnakumar V."/>
            <person name="Chan A.P."/>
            <person name="Thibaud-Nissen F."/>
            <person name="Schobel S."/>
            <person name="Town C.D."/>
        </authorList>
    </citation>
    <scope>GENOME REANNOTATION</scope>
    <source>
        <strain>cv. Columbia</strain>
    </source>
</reference>
<reference key="3">
    <citation type="journal article" date="2008" name="BMC Genomics">
        <title>Genome-wide and expression analysis of protein phosphatase 2C in rice and Arabidopsis.</title>
        <authorList>
            <person name="Xue T."/>
            <person name="Wang D."/>
            <person name="Zhang S."/>
            <person name="Ehlting J."/>
            <person name="Ni F."/>
            <person name="Jacab S."/>
            <person name="Zheng C."/>
            <person name="Zhong Y."/>
        </authorList>
    </citation>
    <scope>GENE FAMILY</scope>
    <scope>NOMENCLATURE</scope>
</reference>
<dbReference type="EC" id="3.1.3.16"/>
<dbReference type="EMBL" id="AL031804">
    <property type="protein sequence ID" value="CAA21204.1"/>
    <property type="molecule type" value="Genomic_DNA"/>
</dbReference>
<dbReference type="EMBL" id="AL161582">
    <property type="protein sequence ID" value="CAB80012.1"/>
    <property type="molecule type" value="Genomic_DNA"/>
</dbReference>
<dbReference type="EMBL" id="CP002687">
    <property type="protein sequence ID" value="AEE86151.1"/>
    <property type="molecule type" value="Genomic_DNA"/>
</dbReference>
<dbReference type="PIR" id="T05303">
    <property type="entry name" value="T05303"/>
</dbReference>
<dbReference type="RefSeq" id="NP_195021.1">
    <property type="nucleotide sequence ID" value="NM_119449.2"/>
</dbReference>
<dbReference type="SMR" id="O82637"/>
<dbReference type="FunCoup" id="O82637">
    <property type="interactions" value="285"/>
</dbReference>
<dbReference type="STRING" id="3702.O82637"/>
<dbReference type="PaxDb" id="3702-AT4G32950.1"/>
<dbReference type="EnsemblPlants" id="AT4G32950.1">
    <property type="protein sequence ID" value="AT4G32950.1"/>
    <property type="gene ID" value="AT4G32950"/>
</dbReference>
<dbReference type="GeneID" id="829432"/>
<dbReference type="Gramene" id="AT4G32950.1">
    <property type="protein sequence ID" value="AT4G32950.1"/>
    <property type="gene ID" value="AT4G32950"/>
</dbReference>
<dbReference type="KEGG" id="ath:AT4G32950"/>
<dbReference type="Araport" id="AT4G32950"/>
<dbReference type="TAIR" id="AT4G32950"/>
<dbReference type="eggNOG" id="KOG0698">
    <property type="taxonomic scope" value="Eukaryota"/>
</dbReference>
<dbReference type="HOGENOM" id="CLU_013173_6_0_1"/>
<dbReference type="InParanoid" id="O82637"/>
<dbReference type="OMA" id="LICETAC"/>
<dbReference type="OrthoDB" id="10264738at2759"/>
<dbReference type="PhylomeDB" id="O82637"/>
<dbReference type="PRO" id="PR:O82637"/>
<dbReference type="Proteomes" id="UP000006548">
    <property type="component" value="Chromosome 4"/>
</dbReference>
<dbReference type="ExpressionAtlas" id="O82637">
    <property type="expression patterns" value="baseline and differential"/>
</dbReference>
<dbReference type="GO" id="GO:0046872">
    <property type="term" value="F:metal ion binding"/>
    <property type="evidence" value="ECO:0007669"/>
    <property type="project" value="UniProtKB-KW"/>
</dbReference>
<dbReference type="GO" id="GO:0004722">
    <property type="term" value="F:protein serine/threonine phosphatase activity"/>
    <property type="evidence" value="ECO:0007669"/>
    <property type="project" value="UniProtKB-EC"/>
</dbReference>
<dbReference type="CDD" id="cd00143">
    <property type="entry name" value="PP2Cc"/>
    <property type="match status" value="1"/>
</dbReference>
<dbReference type="FunFam" id="3.60.40.10:FF:000189">
    <property type="entry name" value="Probable protein phosphatase 2C 61"/>
    <property type="match status" value="1"/>
</dbReference>
<dbReference type="Gene3D" id="3.60.40.10">
    <property type="entry name" value="PPM-type phosphatase domain"/>
    <property type="match status" value="1"/>
</dbReference>
<dbReference type="InterPro" id="IPR015655">
    <property type="entry name" value="PP2C"/>
</dbReference>
<dbReference type="InterPro" id="IPR036457">
    <property type="entry name" value="PPM-type-like_dom_sf"/>
</dbReference>
<dbReference type="InterPro" id="IPR001932">
    <property type="entry name" value="PPM-type_phosphatase-like_dom"/>
</dbReference>
<dbReference type="PANTHER" id="PTHR47992">
    <property type="entry name" value="PROTEIN PHOSPHATASE"/>
    <property type="match status" value="1"/>
</dbReference>
<dbReference type="Pfam" id="PF00481">
    <property type="entry name" value="PP2C"/>
    <property type="match status" value="1"/>
</dbReference>
<dbReference type="SMART" id="SM00332">
    <property type="entry name" value="PP2Cc"/>
    <property type="match status" value="1"/>
</dbReference>
<dbReference type="SUPFAM" id="SSF81606">
    <property type="entry name" value="PP2C-like"/>
    <property type="match status" value="1"/>
</dbReference>
<dbReference type="PROSITE" id="PS51746">
    <property type="entry name" value="PPM_2"/>
    <property type="match status" value="1"/>
</dbReference>
<evidence type="ECO:0000250" key="1"/>
<evidence type="ECO:0000255" key="2">
    <source>
        <dbReference type="PROSITE-ProRule" id="PRU01082"/>
    </source>
</evidence>
<evidence type="ECO:0000305" key="3"/>
<comment type="catalytic activity">
    <reaction>
        <text>O-phospho-L-seryl-[protein] + H2O = L-seryl-[protein] + phosphate</text>
        <dbReference type="Rhea" id="RHEA:20629"/>
        <dbReference type="Rhea" id="RHEA-COMP:9863"/>
        <dbReference type="Rhea" id="RHEA-COMP:11604"/>
        <dbReference type="ChEBI" id="CHEBI:15377"/>
        <dbReference type="ChEBI" id="CHEBI:29999"/>
        <dbReference type="ChEBI" id="CHEBI:43474"/>
        <dbReference type="ChEBI" id="CHEBI:83421"/>
        <dbReference type="EC" id="3.1.3.16"/>
    </reaction>
</comment>
<comment type="catalytic activity">
    <reaction>
        <text>O-phospho-L-threonyl-[protein] + H2O = L-threonyl-[protein] + phosphate</text>
        <dbReference type="Rhea" id="RHEA:47004"/>
        <dbReference type="Rhea" id="RHEA-COMP:11060"/>
        <dbReference type="Rhea" id="RHEA-COMP:11605"/>
        <dbReference type="ChEBI" id="CHEBI:15377"/>
        <dbReference type="ChEBI" id="CHEBI:30013"/>
        <dbReference type="ChEBI" id="CHEBI:43474"/>
        <dbReference type="ChEBI" id="CHEBI:61977"/>
        <dbReference type="EC" id="3.1.3.16"/>
    </reaction>
</comment>
<comment type="cofactor">
    <cofactor evidence="1">
        <name>Mg(2+)</name>
        <dbReference type="ChEBI" id="CHEBI:18420"/>
    </cofactor>
    <cofactor evidence="1">
        <name>Mn(2+)</name>
        <dbReference type="ChEBI" id="CHEBI:29035"/>
    </cofactor>
    <text evidence="1">Binds 2 magnesium or manganese ions per subunit.</text>
</comment>
<comment type="similarity">
    <text evidence="3">Belongs to the PP2C family.</text>
</comment>
<sequence>MGFCFCLSSGGSTDKSQIYEITDYGQENAVLYSDHHVVPQNLGSVSSLAGGKGLNQDAAILHLGYGTEEGALCGVFDGHGPRGAFVSKNVRNQLPSILLGHMNNHSVTRDWKLICETSCLEMDKRILKVKKIHDCSASGTTAVLAVKHGNQVMVANLGDSRAVMIGTSEDGETKVAQLTNDLKPSVPSEAERIRKRNGRVLALESEPHILRVWLPTENRPGLAMSRAFGDFLLKSYGVIATPQVSTHQITSSDQFLLLASDGVWDVLSNEEVATVVMKSASEAGAANEVAEAATNAWIQKFPTVKIDDISVVCLSLNKKHNPQPQI</sequence>